<sequence length="307" mass="33935">MGCDGGTIPKRHELVKGPKKVEKVDKDAELVAQWNYCTLSQEILRRPIVACELGRLYNKDAVIEFLLDKSAEKALGKAASHIRSIKNVTELRLSDNPAWEGDKGNTKGDKHDDLQRARFICPVVGLEMNGRHRFCFLRCCGCVFSERALKEIKAEVCHTCGAAFQEEDIIVLNGTKEDVEMLKKRMEERRLRAKLEKKTKKPKTATECASKPGTTQDSAGPSKVKSGKPEEADPDPREKKSTPAPRGAATNGSASGKVGKPPCGALKRSIADSEESETYKSIFTSHSSAKRSKEESAHWVTHTSYCF</sequence>
<protein>
    <recommendedName>
        <fullName evidence="3">Replication termination factor 2</fullName>
        <shortName>RTF2</shortName>
    </recommendedName>
    <alternativeName>
        <fullName>Replication termination factor 2 domain-containing protein 1</fullName>
    </alternativeName>
</protein>
<evidence type="ECO:0000250" key="1">
    <source>
        <dbReference type="UniProtKB" id="Q9BY42"/>
    </source>
</evidence>
<evidence type="ECO:0000256" key="2">
    <source>
        <dbReference type="SAM" id="MobiDB-lite"/>
    </source>
</evidence>
<evidence type="ECO:0000305" key="3"/>
<evidence type="ECO:0000312" key="4">
    <source>
        <dbReference type="MGI" id="MGI:1913654"/>
    </source>
</evidence>
<proteinExistence type="evidence at protein level"/>
<organism>
    <name type="scientific">Mus musculus</name>
    <name type="common">Mouse</name>
    <dbReference type="NCBI Taxonomy" id="10090"/>
    <lineage>
        <taxon>Eukaryota</taxon>
        <taxon>Metazoa</taxon>
        <taxon>Chordata</taxon>
        <taxon>Craniata</taxon>
        <taxon>Vertebrata</taxon>
        <taxon>Euteleostomi</taxon>
        <taxon>Mammalia</taxon>
        <taxon>Eutheria</taxon>
        <taxon>Euarchontoglires</taxon>
        <taxon>Glires</taxon>
        <taxon>Rodentia</taxon>
        <taxon>Myomorpha</taxon>
        <taxon>Muroidea</taxon>
        <taxon>Muridae</taxon>
        <taxon>Murinae</taxon>
        <taxon>Mus</taxon>
        <taxon>Mus</taxon>
    </lineage>
</organism>
<name>RTF2_MOUSE</name>
<dbReference type="EMBL" id="AK009901">
    <property type="protein sequence ID" value="BAB26573.1"/>
    <property type="molecule type" value="mRNA"/>
</dbReference>
<dbReference type="EMBL" id="AK028792">
    <property type="protein sequence ID" value="BAC26123.1"/>
    <property type="molecule type" value="mRNA"/>
</dbReference>
<dbReference type="EMBL" id="AK053258">
    <property type="protein sequence ID" value="BAC35324.1"/>
    <property type="molecule type" value="mRNA"/>
</dbReference>
<dbReference type="EMBL" id="AK077823">
    <property type="protein sequence ID" value="BAC37024.1"/>
    <property type="molecule type" value="mRNA"/>
</dbReference>
<dbReference type="EMBL" id="AK153121">
    <property type="protein sequence ID" value="BAE31736.1"/>
    <property type="molecule type" value="mRNA"/>
</dbReference>
<dbReference type="EMBL" id="AK167287">
    <property type="protein sequence ID" value="BAE39393.1"/>
    <property type="molecule type" value="mRNA"/>
</dbReference>
<dbReference type="EMBL" id="AL833787">
    <property type="status" value="NOT_ANNOTATED_CDS"/>
    <property type="molecule type" value="Genomic_DNA"/>
</dbReference>
<dbReference type="EMBL" id="BC004803">
    <property type="protein sequence ID" value="AAH04803.1"/>
    <property type="molecule type" value="mRNA"/>
</dbReference>
<dbReference type="EMBL" id="BC049072">
    <property type="protein sequence ID" value="AAH49072.2"/>
    <property type="molecule type" value="mRNA"/>
</dbReference>
<dbReference type="CCDS" id="CCDS17132.1"/>
<dbReference type="RefSeq" id="NP_079818.1">
    <property type="nucleotide sequence ID" value="NM_025542.2"/>
</dbReference>
<dbReference type="BioGRID" id="211448">
    <property type="interactions" value="9"/>
</dbReference>
<dbReference type="FunCoup" id="Q99K95">
    <property type="interactions" value="4279"/>
</dbReference>
<dbReference type="IntAct" id="Q99K95">
    <property type="interactions" value="6"/>
</dbReference>
<dbReference type="STRING" id="10090.ENSMUSP00000029005"/>
<dbReference type="iPTMnet" id="Q99K95"/>
<dbReference type="PhosphoSitePlus" id="Q99K95"/>
<dbReference type="SwissPalm" id="Q99K95"/>
<dbReference type="jPOST" id="Q99K95"/>
<dbReference type="PaxDb" id="10090-ENSMUSP00000029005"/>
<dbReference type="ProteomicsDB" id="260951"/>
<dbReference type="Pumba" id="Q99K95"/>
<dbReference type="Antibodypedia" id="28888">
    <property type="antibodies" value="162 antibodies from 18 providers"/>
</dbReference>
<dbReference type="Ensembl" id="ENSMUST00000029005.4">
    <property type="protein sequence ID" value="ENSMUSP00000029005.4"/>
    <property type="gene ID" value="ENSMUSG00000027502.12"/>
</dbReference>
<dbReference type="GeneID" id="66404"/>
<dbReference type="KEGG" id="mmu:66404"/>
<dbReference type="UCSC" id="uc008ocw.1">
    <property type="organism name" value="mouse"/>
</dbReference>
<dbReference type="AGR" id="MGI:1913654"/>
<dbReference type="CTD" id="51507"/>
<dbReference type="MGI" id="MGI:1913654">
    <property type="gene designation" value="Rtf2"/>
</dbReference>
<dbReference type="VEuPathDB" id="HostDB:ENSMUSG00000027502"/>
<dbReference type="eggNOG" id="KOG3113">
    <property type="taxonomic scope" value="Eukaryota"/>
</dbReference>
<dbReference type="GeneTree" id="ENSGT00390000010923"/>
<dbReference type="HOGENOM" id="CLU_048955_1_0_1"/>
<dbReference type="InParanoid" id="Q99K95"/>
<dbReference type="OMA" id="EFRWLHC"/>
<dbReference type="OrthoDB" id="247013at2759"/>
<dbReference type="PhylomeDB" id="Q99K95"/>
<dbReference type="TreeFam" id="TF314621"/>
<dbReference type="BioGRID-ORCS" id="66404">
    <property type="hits" value="25 hits in 81 CRISPR screens"/>
</dbReference>
<dbReference type="ChiTaRS" id="Rtfdc1">
    <property type="organism name" value="mouse"/>
</dbReference>
<dbReference type="PRO" id="PR:Q99K95"/>
<dbReference type="Proteomes" id="UP000000589">
    <property type="component" value="Chromosome 2"/>
</dbReference>
<dbReference type="RNAct" id="Q99K95">
    <property type="molecule type" value="protein"/>
</dbReference>
<dbReference type="Bgee" id="ENSMUSG00000027502">
    <property type="expression patterns" value="Expressed in spermatid and 269 other cell types or tissues"/>
</dbReference>
<dbReference type="GO" id="GO:0005634">
    <property type="term" value="C:nucleus"/>
    <property type="evidence" value="ECO:0007669"/>
    <property type="project" value="GOC"/>
</dbReference>
<dbReference type="GO" id="GO:0005657">
    <property type="term" value="C:replication fork"/>
    <property type="evidence" value="ECO:0000250"/>
    <property type="project" value="UniProtKB"/>
</dbReference>
<dbReference type="GO" id="GO:0003677">
    <property type="term" value="F:DNA binding"/>
    <property type="evidence" value="ECO:0000250"/>
    <property type="project" value="UniProtKB"/>
</dbReference>
<dbReference type="GO" id="GO:0072711">
    <property type="term" value="P:cellular response to hydroxyurea"/>
    <property type="evidence" value="ECO:0000250"/>
    <property type="project" value="UniProtKB"/>
</dbReference>
<dbReference type="GO" id="GO:1902979">
    <property type="term" value="P:mitotic DNA replication termination"/>
    <property type="evidence" value="ECO:0007669"/>
    <property type="project" value="InterPro"/>
</dbReference>
<dbReference type="GO" id="GO:0097752">
    <property type="term" value="P:regulation of DNA stability"/>
    <property type="evidence" value="ECO:0000250"/>
    <property type="project" value="UniProtKB"/>
</dbReference>
<dbReference type="CDD" id="cd16653">
    <property type="entry name" value="RING-like_Rtf2"/>
    <property type="match status" value="1"/>
</dbReference>
<dbReference type="InterPro" id="IPR006735">
    <property type="entry name" value="Rtf2"/>
</dbReference>
<dbReference type="InterPro" id="IPR027799">
    <property type="entry name" value="Rtf2_RING-finger"/>
</dbReference>
<dbReference type="PANTHER" id="PTHR12775">
    <property type="entry name" value="PROTEIN C20ORF43 HOMOLOG"/>
    <property type="match status" value="1"/>
</dbReference>
<dbReference type="PANTHER" id="PTHR12775:SF0">
    <property type="entry name" value="REPLICATION TERMINATION FACTOR 2"/>
    <property type="match status" value="1"/>
</dbReference>
<dbReference type="Pfam" id="PF04641">
    <property type="entry name" value="Rtf2"/>
    <property type="match status" value="1"/>
</dbReference>
<gene>
    <name evidence="4" type="primary">Rtf2</name>
    <name type="synonym">Rtfdc1</name>
</gene>
<comment type="function">
    <text evidence="1">Replication termination factor which is a component of the elongating replisome. Required for ATR pathway signaling upon DNA damage and has a positive activity during DNA replication. Might function to facilitate fork pausing at replication fork barriers like the rDNA. May be globally required to stimulate ATR signaling after the fork stalls or encounters a lesion. Interacts with nascent DNA.</text>
</comment>
<comment type="subunit">
    <text evidence="1">Interacts with DDI2; probably also interacts with DDI1.</text>
</comment>
<comment type="subcellular location">
    <subcellularLocation>
        <location evidence="1">Chromosome</location>
    </subcellularLocation>
    <text evidence="1">Localizes at the replication fork.</text>
</comment>
<comment type="PTM">
    <text evidence="1">Undergoes proteasomal degradation, via DDI1 and DDI2. Removal from stalled replisomes and degradation are required for genome stability.</text>
</comment>
<comment type="similarity">
    <text evidence="3">Belongs to the rtf2 family.</text>
</comment>
<accession>Q99K95</accession>
<accession>A2APA0</accession>
<accession>Q543D3</accession>
<accession>Q80X88</accession>
<accession>Q9CV27</accession>
<feature type="chain" id="PRO_0000079428" description="Replication termination factor 2">
    <location>
        <begin position="1"/>
        <end position="307"/>
    </location>
</feature>
<feature type="region of interest" description="Disordered" evidence="2">
    <location>
        <begin position="193"/>
        <end position="296"/>
    </location>
</feature>
<feature type="compositionally biased region" description="Basic and acidic residues" evidence="2">
    <location>
        <begin position="227"/>
        <end position="241"/>
    </location>
</feature>
<feature type="modified residue" description="Phosphoserine" evidence="1">
    <location>
        <position position="288"/>
    </location>
</feature>
<keyword id="KW-0158">Chromosome</keyword>
<keyword id="KW-0597">Phosphoprotein</keyword>
<keyword id="KW-1185">Reference proteome</keyword>
<reference key="1">
    <citation type="journal article" date="2005" name="Science">
        <title>The transcriptional landscape of the mammalian genome.</title>
        <authorList>
            <person name="Carninci P."/>
            <person name="Kasukawa T."/>
            <person name="Katayama S."/>
            <person name="Gough J."/>
            <person name="Frith M.C."/>
            <person name="Maeda N."/>
            <person name="Oyama R."/>
            <person name="Ravasi T."/>
            <person name="Lenhard B."/>
            <person name="Wells C."/>
            <person name="Kodzius R."/>
            <person name="Shimokawa K."/>
            <person name="Bajic V.B."/>
            <person name="Brenner S.E."/>
            <person name="Batalov S."/>
            <person name="Forrest A.R."/>
            <person name="Zavolan M."/>
            <person name="Davis M.J."/>
            <person name="Wilming L.G."/>
            <person name="Aidinis V."/>
            <person name="Allen J.E."/>
            <person name="Ambesi-Impiombato A."/>
            <person name="Apweiler R."/>
            <person name="Aturaliya R.N."/>
            <person name="Bailey T.L."/>
            <person name="Bansal M."/>
            <person name="Baxter L."/>
            <person name="Beisel K.W."/>
            <person name="Bersano T."/>
            <person name="Bono H."/>
            <person name="Chalk A.M."/>
            <person name="Chiu K.P."/>
            <person name="Choudhary V."/>
            <person name="Christoffels A."/>
            <person name="Clutterbuck D.R."/>
            <person name="Crowe M.L."/>
            <person name="Dalla E."/>
            <person name="Dalrymple B.P."/>
            <person name="de Bono B."/>
            <person name="Della Gatta G."/>
            <person name="di Bernardo D."/>
            <person name="Down T."/>
            <person name="Engstrom P."/>
            <person name="Fagiolini M."/>
            <person name="Faulkner G."/>
            <person name="Fletcher C.F."/>
            <person name="Fukushima T."/>
            <person name="Furuno M."/>
            <person name="Futaki S."/>
            <person name="Gariboldi M."/>
            <person name="Georgii-Hemming P."/>
            <person name="Gingeras T.R."/>
            <person name="Gojobori T."/>
            <person name="Green R.E."/>
            <person name="Gustincich S."/>
            <person name="Harbers M."/>
            <person name="Hayashi Y."/>
            <person name="Hensch T.K."/>
            <person name="Hirokawa N."/>
            <person name="Hill D."/>
            <person name="Huminiecki L."/>
            <person name="Iacono M."/>
            <person name="Ikeo K."/>
            <person name="Iwama A."/>
            <person name="Ishikawa T."/>
            <person name="Jakt M."/>
            <person name="Kanapin A."/>
            <person name="Katoh M."/>
            <person name="Kawasawa Y."/>
            <person name="Kelso J."/>
            <person name="Kitamura H."/>
            <person name="Kitano H."/>
            <person name="Kollias G."/>
            <person name="Krishnan S.P."/>
            <person name="Kruger A."/>
            <person name="Kummerfeld S.K."/>
            <person name="Kurochkin I.V."/>
            <person name="Lareau L.F."/>
            <person name="Lazarevic D."/>
            <person name="Lipovich L."/>
            <person name="Liu J."/>
            <person name="Liuni S."/>
            <person name="McWilliam S."/>
            <person name="Madan Babu M."/>
            <person name="Madera M."/>
            <person name="Marchionni L."/>
            <person name="Matsuda H."/>
            <person name="Matsuzawa S."/>
            <person name="Miki H."/>
            <person name="Mignone F."/>
            <person name="Miyake S."/>
            <person name="Morris K."/>
            <person name="Mottagui-Tabar S."/>
            <person name="Mulder N."/>
            <person name="Nakano N."/>
            <person name="Nakauchi H."/>
            <person name="Ng P."/>
            <person name="Nilsson R."/>
            <person name="Nishiguchi S."/>
            <person name="Nishikawa S."/>
            <person name="Nori F."/>
            <person name="Ohara O."/>
            <person name="Okazaki Y."/>
            <person name="Orlando V."/>
            <person name="Pang K.C."/>
            <person name="Pavan W.J."/>
            <person name="Pavesi G."/>
            <person name="Pesole G."/>
            <person name="Petrovsky N."/>
            <person name="Piazza S."/>
            <person name="Reed J."/>
            <person name="Reid J.F."/>
            <person name="Ring B.Z."/>
            <person name="Ringwald M."/>
            <person name="Rost B."/>
            <person name="Ruan Y."/>
            <person name="Salzberg S.L."/>
            <person name="Sandelin A."/>
            <person name="Schneider C."/>
            <person name="Schoenbach C."/>
            <person name="Sekiguchi K."/>
            <person name="Semple C.A."/>
            <person name="Seno S."/>
            <person name="Sessa L."/>
            <person name="Sheng Y."/>
            <person name="Shibata Y."/>
            <person name="Shimada H."/>
            <person name="Shimada K."/>
            <person name="Silva D."/>
            <person name="Sinclair B."/>
            <person name="Sperling S."/>
            <person name="Stupka E."/>
            <person name="Sugiura K."/>
            <person name="Sultana R."/>
            <person name="Takenaka Y."/>
            <person name="Taki K."/>
            <person name="Tammoja K."/>
            <person name="Tan S.L."/>
            <person name="Tang S."/>
            <person name="Taylor M.S."/>
            <person name="Tegner J."/>
            <person name="Teichmann S.A."/>
            <person name="Ueda H.R."/>
            <person name="van Nimwegen E."/>
            <person name="Verardo R."/>
            <person name="Wei C.L."/>
            <person name="Yagi K."/>
            <person name="Yamanishi H."/>
            <person name="Zabarovsky E."/>
            <person name="Zhu S."/>
            <person name="Zimmer A."/>
            <person name="Hide W."/>
            <person name="Bult C."/>
            <person name="Grimmond S.M."/>
            <person name="Teasdale R.D."/>
            <person name="Liu E.T."/>
            <person name="Brusic V."/>
            <person name="Quackenbush J."/>
            <person name="Wahlestedt C."/>
            <person name="Mattick J.S."/>
            <person name="Hume D.A."/>
            <person name="Kai C."/>
            <person name="Sasaki D."/>
            <person name="Tomaru Y."/>
            <person name="Fukuda S."/>
            <person name="Kanamori-Katayama M."/>
            <person name="Suzuki M."/>
            <person name="Aoki J."/>
            <person name="Arakawa T."/>
            <person name="Iida J."/>
            <person name="Imamura K."/>
            <person name="Itoh M."/>
            <person name="Kato T."/>
            <person name="Kawaji H."/>
            <person name="Kawagashira N."/>
            <person name="Kawashima T."/>
            <person name="Kojima M."/>
            <person name="Kondo S."/>
            <person name="Konno H."/>
            <person name="Nakano K."/>
            <person name="Ninomiya N."/>
            <person name="Nishio T."/>
            <person name="Okada M."/>
            <person name="Plessy C."/>
            <person name="Shibata K."/>
            <person name="Shiraki T."/>
            <person name="Suzuki S."/>
            <person name="Tagami M."/>
            <person name="Waki K."/>
            <person name="Watahiki A."/>
            <person name="Okamura-Oho Y."/>
            <person name="Suzuki H."/>
            <person name="Kawai J."/>
            <person name="Hayashizaki Y."/>
        </authorList>
    </citation>
    <scope>NUCLEOTIDE SEQUENCE [LARGE SCALE MRNA]</scope>
    <source>
        <strain>C57BL/6J</strain>
        <tissue>Bone marrow</tissue>
        <tissue>Forelimb</tissue>
        <tissue>Skin</tissue>
        <tissue>Tongue</tissue>
    </source>
</reference>
<reference key="2">
    <citation type="journal article" date="2009" name="PLoS Biol.">
        <title>Lineage-specific biology revealed by a finished genome assembly of the mouse.</title>
        <authorList>
            <person name="Church D.M."/>
            <person name="Goodstadt L."/>
            <person name="Hillier L.W."/>
            <person name="Zody M.C."/>
            <person name="Goldstein S."/>
            <person name="She X."/>
            <person name="Bult C.J."/>
            <person name="Agarwala R."/>
            <person name="Cherry J.L."/>
            <person name="DiCuccio M."/>
            <person name="Hlavina W."/>
            <person name="Kapustin Y."/>
            <person name="Meric P."/>
            <person name="Maglott D."/>
            <person name="Birtle Z."/>
            <person name="Marques A.C."/>
            <person name="Graves T."/>
            <person name="Zhou S."/>
            <person name="Teague B."/>
            <person name="Potamousis K."/>
            <person name="Churas C."/>
            <person name="Place M."/>
            <person name="Herschleb J."/>
            <person name="Runnheim R."/>
            <person name="Forrest D."/>
            <person name="Amos-Landgraf J."/>
            <person name="Schwartz D.C."/>
            <person name="Cheng Z."/>
            <person name="Lindblad-Toh K."/>
            <person name="Eichler E.E."/>
            <person name="Ponting C.P."/>
        </authorList>
    </citation>
    <scope>NUCLEOTIDE SEQUENCE [LARGE SCALE GENOMIC DNA]</scope>
    <source>
        <strain>C57BL/6J</strain>
    </source>
</reference>
<reference key="3">
    <citation type="journal article" date="2004" name="Genome Res.">
        <title>The status, quality, and expansion of the NIH full-length cDNA project: the Mammalian Gene Collection (MGC).</title>
        <authorList>
            <consortium name="The MGC Project Team"/>
        </authorList>
    </citation>
    <scope>NUCLEOTIDE SEQUENCE [LARGE SCALE MRNA]</scope>
    <source>
        <tissue>Brain</tissue>
        <tissue>Mammary gland</tissue>
    </source>
</reference>
<reference key="4">
    <citation type="journal article" date="2010" name="Cell">
        <title>A tissue-specific atlas of mouse protein phosphorylation and expression.</title>
        <authorList>
            <person name="Huttlin E.L."/>
            <person name="Jedrychowski M.P."/>
            <person name="Elias J.E."/>
            <person name="Goswami T."/>
            <person name="Rad R."/>
            <person name="Beausoleil S.A."/>
            <person name="Villen J."/>
            <person name="Haas W."/>
            <person name="Sowa M.E."/>
            <person name="Gygi S.P."/>
        </authorList>
    </citation>
    <scope>IDENTIFICATION BY MASS SPECTROMETRY [LARGE SCALE ANALYSIS]</scope>
    <source>
        <tissue>Brain</tissue>
        <tissue>Lung</tissue>
        <tissue>Spleen</tissue>
    </source>
</reference>